<feature type="chain" id="PRO_1000087569" description="Ribosomal RNA small subunit methyltransferase J">
    <location>
        <begin position="1"/>
        <end position="252"/>
    </location>
</feature>
<feature type="binding site" evidence="1">
    <location>
        <begin position="101"/>
        <end position="102"/>
    </location>
    <ligand>
        <name>S-adenosyl-L-methionine</name>
        <dbReference type="ChEBI" id="CHEBI:59789"/>
    </ligand>
</feature>
<feature type="binding site" evidence="1">
    <location>
        <begin position="117"/>
        <end position="118"/>
    </location>
    <ligand>
        <name>S-adenosyl-L-methionine</name>
        <dbReference type="ChEBI" id="CHEBI:59789"/>
    </ligand>
</feature>
<feature type="binding site" evidence="1">
    <location>
        <begin position="153"/>
        <end position="154"/>
    </location>
    <ligand>
        <name>S-adenosyl-L-methionine</name>
        <dbReference type="ChEBI" id="CHEBI:59789"/>
    </ligand>
</feature>
<feature type="binding site" evidence="1">
    <location>
        <position position="171"/>
    </location>
    <ligand>
        <name>S-adenosyl-L-methionine</name>
        <dbReference type="ChEBI" id="CHEBI:59789"/>
    </ligand>
</feature>
<reference key="1">
    <citation type="submission" date="2007-11" db="EMBL/GenBank/DDBJ databases">
        <authorList>
            <consortium name="The Salmonella enterica serovar Paratyphi B Genome Sequencing Project"/>
            <person name="McClelland M."/>
            <person name="Sanderson E.K."/>
            <person name="Porwollik S."/>
            <person name="Spieth J."/>
            <person name="Clifton W.S."/>
            <person name="Fulton R."/>
            <person name="Cordes M."/>
            <person name="Wollam A."/>
            <person name="Shah N."/>
            <person name="Pepin K."/>
            <person name="Bhonagiri V."/>
            <person name="Nash W."/>
            <person name="Johnson M."/>
            <person name="Thiruvilangam P."/>
            <person name="Wilson R."/>
        </authorList>
    </citation>
    <scope>NUCLEOTIDE SEQUENCE [LARGE SCALE GENOMIC DNA]</scope>
    <source>
        <strain>ATCC BAA-1250 / SPB7</strain>
    </source>
</reference>
<keyword id="KW-0963">Cytoplasm</keyword>
<keyword id="KW-0489">Methyltransferase</keyword>
<keyword id="KW-0698">rRNA processing</keyword>
<keyword id="KW-0949">S-adenosyl-L-methionine</keyword>
<keyword id="KW-0808">Transferase</keyword>
<organism>
    <name type="scientific">Salmonella paratyphi B (strain ATCC BAA-1250 / SPB7)</name>
    <dbReference type="NCBI Taxonomy" id="1016998"/>
    <lineage>
        <taxon>Bacteria</taxon>
        <taxon>Pseudomonadati</taxon>
        <taxon>Pseudomonadota</taxon>
        <taxon>Gammaproteobacteria</taxon>
        <taxon>Enterobacterales</taxon>
        <taxon>Enterobacteriaceae</taxon>
        <taxon>Salmonella</taxon>
    </lineage>
</organism>
<evidence type="ECO:0000255" key="1">
    <source>
        <dbReference type="HAMAP-Rule" id="MF_01523"/>
    </source>
</evidence>
<sequence>MQICLMDETGATDGALSVLAARWGLEHDEDNPMALVLTPQYLELRKRDEPKLGGIFVDFVGGAMAHRRKFGGGRGEAVAKAVGIKGDYLPDVVDATAGLGRDAFVLASVGCRVRMLERNPVVAALLDDGLTRGYADADIGGWLQERLQLIHASSLTALTDITPRPQVVYLDPMFPHRQKSALVKKEMRVFQSLVGPDLDADGLLEPARQLATKRVVVKRPDYAPPLADVATPNAIVTKGHRFDIYAGTPLTE</sequence>
<dbReference type="EC" id="2.1.1.242" evidence="1"/>
<dbReference type="EMBL" id="CP000886">
    <property type="protein sequence ID" value="ABX69776.1"/>
    <property type="molecule type" value="Genomic_DNA"/>
</dbReference>
<dbReference type="RefSeq" id="WP_001165131.1">
    <property type="nucleotide sequence ID" value="NC_010102.1"/>
</dbReference>
<dbReference type="SMR" id="A9MU21"/>
<dbReference type="KEGG" id="spq:SPAB_04461"/>
<dbReference type="PATRIC" id="fig|1016998.12.peg.4198"/>
<dbReference type="HOGENOM" id="CLU_076324_0_0_6"/>
<dbReference type="BioCyc" id="SENT1016998:SPAB_RS18155-MONOMER"/>
<dbReference type="Proteomes" id="UP000008556">
    <property type="component" value="Chromosome"/>
</dbReference>
<dbReference type="GO" id="GO:0005737">
    <property type="term" value="C:cytoplasm"/>
    <property type="evidence" value="ECO:0007669"/>
    <property type="project" value="UniProtKB-SubCell"/>
</dbReference>
<dbReference type="GO" id="GO:0008990">
    <property type="term" value="F:rRNA (guanine-N2-)-methyltransferase activity"/>
    <property type="evidence" value="ECO:0007669"/>
    <property type="project" value="UniProtKB-UniRule"/>
</dbReference>
<dbReference type="CDD" id="cd02440">
    <property type="entry name" value="AdoMet_MTases"/>
    <property type="match status" value="1"/>
</dbReference>
<dbReference type="FunFam" id="3.40.50.150:FF:000072">
    <property type="entry name" value="Ribosomal RNA small subunit methyltransferase J"/>
    <property type="match status" value="1"/>
</dbReference>
<dbReference type="Gene3D" id="3.40.50.150">
    <property type="entry name" value="Vaccinia Virus protein VP39"/>
    <property type="match status" value="1"/>
</dbReference>
<dbReference type="Gene3D" id="3.40.1630.10">
    <property type="entry name" value="YhiQ-like domain"/>
    <property type="match status" value="1"/>
</dbReference>
<dbReference type="HAMAP" id="MF_01523">
    <property type="entry name" value="16SrRNA_methyltr_J"/>
    <property type="match status" value="1"/>
</dbReference>
<dbReference type="InterPro" id="IPR007536">
    <property type="entry name" value="16SrRNA_methylTrfase_J"/>
</dbReference>
<dbReference type="InterPro" id="IPR029063">
    <property type="entry name" value="SAM-dependent_MTases_sf"/>
</dbReference>
<dbReference type="NCBIfam" id="NF008012">
    <property type="entry name" value="PRK10742.1"/>
    <property type="match status" value="1"/>
</dbReference>
<dbReference type="PANTHER" id="PTHR36112">
    <property type="entry name" value="RIBOSOMAL RNA SMALL SUBUNIT METHYLTRANSFERASE J"/>
    <property type="match status" value="1"/>
</dbReference>
<dbReference type="PANTHER" id="PTHR36112:SF1">
    <property type="entry name" value="RIBOSOMAL RNA SMALL SUBUNIT METHYLTRANSFERASE J"/>
    <property type="match status" value="1"/>
</dbReference>
<dbReference type="Pfam" id="PF04445">
    <property type="entry name" value="SAM_MT"/>
    <property type="match status" value="1"/>
</dbReference>
<dbReference type="SUPFAM" id="SSF53335">
    <property type="entry name" value="S-adenosyl-L-methionine-dependent methyltransferases"/>
    <property type="match status" value="1"/>
</dbReference>
<accession>A9MU21</accession>
<name>RSMJ_SALPB</name>
<protein>
    <recommendedName>
        <fullName evidence="1">Ribosomal RNA small subunit methyltransferase J</fullName>
        <ecNumber evidence="1">2.1.1.242</ecNumber>
    </recommendedName>
    <alternativeName>
        <fullName evidence="1">16S rRNA m2G1516 methyltransferase</fullName>
    </alternativeName>
    <alternativeName>
        <fullName evidence="1">rRNA (guanine-N(2)-)-methyltransferase</fullName>
    </alternativeName>
</protein>
<comment type="function">
    <text evidence="1">Specifically methylates the guanosine in position 1516 of 16S rRNA.</text>
</comment>
<comment type="catalytic activity">
    <reaction evidence="1">
        <text>guanosine(1516) in 16S rRNA + S-adenosyl-L-methionine = N(2)-methylguanosine(1516) in 16S rRNA + S-adenosyl-L-homocysteine + H(+)</text>
        <dbReference type="Rhea" id="RHEA:43220"/>
        <dbReference type="Rhea" id="RHEA-COMP:10412"/>
        <dbReference type="Rhea" id="RHEA-COMP:10413"/>
        <dbReference type="ChEBI" id="CHEBI:15378"/>
        <dbReference type="ChEBI" id="CHEBI:57856"/>
        <dbReference type="ChEBI" id="CHEBI:59789"/>
        <dbReference type="ChEBI" id="CHEBI:74269"/>
        <dbReference type="ChEBI" id="CHEBI:74481"/>
        <dbReference type="EC" id="2.1.1.242"/>
    </reaction>
</comment>
<comment type="subcellular location">
    <subcellularLocation>
        <location evidence="1">Cytoplasm</location>
    </subcellularLocation>
</comment>
<comment type="similarity">
    <text evidence="1">Belongs to the methyltransferase superfamily. RsmJ family.</text>
</comment>
<proteinExistence type="inferred from homology"/>
<gene>
    <name evidence="1" type="primary">rsmJ</name>
    <name type="synonym">yhiQ</name>
    <name type="ordered locus">SPAB_04461</name>
</gene>